<organismHost>
    <name type="scientific">Homo sapiens</name>
    <name type="common">Human</name>
    <dbReference type="NCBI Taxonomy" id="9606"/>
</organismHost>
<evidence type="ECO:0000255" key="1"/>
<evidence type="ECO:0000305" key="2"/>
<feature type="chain" id="PRO_0000221753" description="Early E3 20.3 kDa glycoprotein">
    <location>
        <begin position="1"/>
        <end position="181"/>
    </location>
</feature>
<feature type="glycosylation site" description="N-linked (GlcNAc...) asparagine; by host" evidence="1">
    <location>
        <position position="29"/>
    </location>
</feature>
<feature type="glycosylation site" description="N-linked (GlcNAc...) asparagine; by host" evidence="1">
    <location>
        <position position="57"/>
    </location>
</feature>
<feature type="glycosylation site" description="N-linked (GlcNAc...) asparagine; by host" evidence="1">
    <location>
        <position position="70"/>
    </location>
</feature>
<feature type="glycosylation site" description="N-linked (GlcNAc...) asparagine; by host" evidence="1">
    <location>
        <position position="75"/>
    </location>
</feature>
<organism>
    <name type="scientific">Human adenovirus B serotype 11 (strain BC34)</name>
    <name type="common">HAdV-11</name>
    <name type="synonym">Human adenovirus 11A (strain BC34)</name>
    <dbReference type="NCBI Taxonomy" id="343463"/>
    <lineage>
        <taxon>Viruses</taxon>
        <taxon>Varidnaviria</taxon>
        <taxon>Bamfordvirae</taxon>
        <taxon>Preplasmiviricota</taxon>
        <taxon>Tectiliviricetes</taxon>
        <taxon>Rowavirales</taxon>
        <taxon>Adenoviridae</taxon>
        <taxon>Mastadenovirus</taxon>
        <taxon>Human mastadenovirus B</taxon>
    </lineage>
</organism>
<keyword id="KW-0244">Early protein</keyword>
<keyword id="KW-0325">Glycoprotein</keyword>
<accession>P35767</accession>
<protein>
    <recommendedName>
        <fullName>Early E3 20.3 kDa glycoprotein</fullName>
    </recommendedName>
</protein>
<comment type="function">
    <text>E3 proteins seem to be dispensable for virus growth in tissue culture cells. They are potentially important for virus growth under special conditions; E3 region may help adenoviruses to evade the immune surveillance of the host.</text>
</comment>
<comment type="similarity">
    <text evidence="2">Belongs to the adenoviridae E3_20 family.</text>
</comment>
<dbReference type="EMBL" id="M94459">
    <property type="status" value="NOT_ANNOTATED_CDS"/>
    <property type="molecule type" value="Genomic_DNA"/>
</dbReference>
<dbReference type="PIR" id="F44057">
    <property type="entry name" value="F44057"/>
</dbReference>
<dbReference type="InterPro" id="IPR003471">
    <property type="entry name" value="Adeno_E3_CR1"/>
</dbReference>
<dbReference type="InterPro" id="IPR003470">
    <property type="entry name" value="Adeno_E3_CR2"/>
</dbReference>
<dbReference type="Pfam" id="PF02440">
    <property type="entry name" value="Adeno_E3_CR1"/>
    <property type="match status" value="1"/>
</dbReference>
<dbReference type="Pfam" id="PF02439">
    <property type="entry name" value="Adeno_E3_CR2"/>
    <property type="match status" value="1"/>
</dbReference>
<reference key="1">
    <citation type="journal article" date="1992" name="Virology">
        <title>The nucleotide sequence of adenovirus type 11 early 3 region: comparison of genome type Ad11p and Ad11a.</title>
        <authorList>
            <person name="Mei Y.-F."/>
            <person name="Wadell G."/>
        </authorList>
    </citation>
    <scope>NUCLEOTIDE SEQUENCE [GENOMIC DNA]</scope>
</reference>
<sequence length="181" mass="20324">MAFLTALILVSIVTAAHGQTVVSIPLGHNYTLIGPPITSEVIWTKLGSVDYFDIICNKTKPIIVTCNIQNLTLINVSKVYSGYYYGYDRYSSQYRNYLVRVTQSKTTKMPNMAEIRSDDNSLETFTSSTTPDEKNIPDSMIAIIAAVAVVMALPVICMLLYACRYKKFHPKKQDLLLRLNI</sequence>
<proteinExistence type="inferred from homology"/>
<name>E320_ADE1A</name>